<name>NUOA_BURCJ</name>
<evidence type="ECO:0000255" key="1">
    <source>
        <dbReference type="HAMAP-Rule" id="MF_01394"/>
    </source>
</evidence>
<organism>
    <name type="scientific">Burkholderia cenocepacia (strain ATCC BAA-245 / DSM 16553 / LMG 16656 / NCTC 13227 / J2315 / CF5610)</name>
    <name type="common">Burkholderia cepacia (strain J2315)</name>
    <dbReference type="NCBI Taxonomy" id="216591"/>
    <lineage>
        <taxon>Bacteria</taxon>
        <taxon>Pseudomonadati</taxon>
        <taxon>Pseudomonadota</taxon>
        <taxon>Betaproteobacteria</taxon>
        <taxon>Burkholderiales</taxon>
        <taxon>Burkholderiaceae</taxon>
        <taxon>Burkholderia</taxon>
        <taxon>Burkholderia cepacia complex</taxon>
    </lineage>
</organism>
<sequence>MNLAAYYPVLLFLLVGTGLGIALVSIGKLLGPNKPDVEKNAPYECGFEAFEDARMKFDVRYYLVAILFIIFDLETAFLFPWGVALRDIGWPGFIAMMIFLLEFLLGFAYIWKKGGLDWE</sequence>
<feature type="chain" id="PRO_0000362638" description="NADH-quinone oxidoreductase subunit A">
    <location>
        <begin position="1"/>
        <end position="119"/>
    </location>
</feature>
<feature type="transmembrane region" description="Helical" evidence="1">
    <location>
        <begin position="7"/>
        <end position="27"/>
    </location>
</feature>
<feature type="transmembrane region" description="Helical" evidence="1">
    <location>
        <begin position="63"/>
        <end position="83"/>
    </location>
</feature>
<feature type="transmembrane region" description="Helical" evidence="1">
    <location>
        <begin position="88"/>
        <end position="108"/>
    </location>
</feature>
<gene>
    <name evidence="1" type="primary">nuoA</name>
    <name type="ordered locus">BceJ2315_23040</name>
    <name type="ORF">BCAL2344</name>
</gene>
<comment type="function">
    <text evidence="1">NDH-1 shuttles electrons from NADH, via FMN and iron-sulfur (Fe-S) centers, to quinones in the respiratory chain. The immediate electron acceptor for the enzyme in this species is believed to be ubiquinone. Couples the redox reaction to proton translocation (for every two electrons transferred, four hydrogen ions are translocated across the cytoplasmic membrane), and thus conserves the redox energy in a proton gradient.</text>
</comment>
<comment type="catalytic activity">
    <reaction evidence="1">
        <text>a quinone + NADH + 5 H(+)(in) = a quinol + NAD(+) + 4 H(+)(out)</text>
        <dbReference type="Rhea" id="RHEA:57888"/>
        <dbReference type="ChEBI" id="CHEBI:15378"/>
        <dbReference type="ChEBI" id="CHEBI:24646"/>
        <dbReference type="ChEBI" id="CHEBI:57540"/>
        <dbReference type="ChEBI" id="CHEBI:57945"/>
        <dbReference type="ChEBI" id="CHEBI:132124"/>
    </reaction>
</comment>
<comment type="subunit">
    <text evidence="1">NDH-1 is composed of 14 different subunits. Subunits NuoA, H, J, K, L, M, N constitute the membrane sector of the complex.</text>
</comment>
<comment type="subcellular location">
    <subcellularLocation>
        <location evidence="1">Cell inner membrane</location>
        <topology evidence="1">Multi-pass membrane protein</topology>
    </subcellularLocation>
</comment>
<comment type="similarity">
    <text evidence="1">Belongs to the complex I subunit 3 family.</text>
</comment>
<protein>
    <recommendedName>
        <fullName evidence="1">NADH-quinone oxidoreductase subunit A</fullName>
        <ecNumber evidence="1">7.1.1.-</ecNumber>
    </recommendedName>
    <alternativeName>
        <fullName evidence="1">NADH dehydrogenase I subunit A</fullName>
    </alternativeName>
    <alternativeName>
        <fullName evidence="1">NDH-1 subunit A</fullName>
    </alternativeName>
    <alternativeName>
        <fullName evidence="1">NUO1</fullName>
    </alternativeName>
</protein>
<dbReference type="EC" id="7.1.1.-" evidence="1"/>
<dbReference type="EMBL" id="AM747720">
    <property type="protein sequence ID" value="CAR52645.1"/>
    <property type="molecule type" value="Genomic_DNA"/>
</dbReference>
<dbReference type="RefSeq" id="WP_006398798.1">
    <property type="nucleotide sequence ID" value="NC_011000.1"/>
</dbReference>
<dbReference type="SMR" id="B4E5M2"/>
<dbReference type="KEGG" id="bcj:BCAL2344"/>
<dbReference type="eggNOG" id="COG0838">
    <property type="taxonomic scope" value="Bacteria"/>
</dbReference>
<dbReference type="HOGENOM" id="CLU_119549_3_1_4"/>
<dbReference type="BioCyc" id="BCEN216591:G1G1V-2587-MONOMER"/>
<dbReference type="Proteomes" id="UP000001035">
    <property type="component" value="Chromosome 1"/>
</dbReference>
<dbReference type="GO" id="GO:0030964">
    <property type="term" value="C:NADH dehydrogenase complex"/>
    <property type="evidence" value="ECO:0007669"/>
    <property type="project" value="TreeGrafter"/>
</dbReference>
<dbReference type="GO" id="GO:0005886">
    <property type="term" value="C:plasma membrane"/>
    <property type="evidence" value="ECO:0007669"/>
    <property type="project" value="UniProtKB-SubCell"/>
</dbReference>
<dbReference type="GO" id="GO:0008137">
    <property type="term" value="F:NADH dehydrogenase (ubiquinone) activity"/>
    <property type="evidence" value="ECO:0007669"/>
    <property type="project" value="InterPro"/>
</dbReference>
<dbReference type="GO" id="GO:0050136">
    <property type="term" value="F:NADH:ubiquinone reductase (non-electrogenic) activity"/>
    <property type="evidence" value="ECO:0007669"/>
    <property type="project" value="UniProtKB-UniRule"/>
</dbReference>
<dbReference type="GO" id="GO:0048038">
    <property type="term" value="F:quinone binding"/>
    <property type="evidence" value="ECO:0007669"/>
    <property type="project" value="UniProtKB-KW"/>
</dbReference>
<dbReference type="FunFam" id="1.20.58.1610:FF:000004">
    <property type="entry name" value="NADH-quinone oxidoreductase subunit A"/>
    <property type="match status" value="1"/>
</dbReference>
<dbReference type="Gene3D" id="1.20.58.1610">
    <property type="entry name" value="NADH:ubiquinone/plastoquinone oxidoreductase, chain 3"/>
    <property type="match status" value="1"/>
</dbReference>
<dbReference type="HAMAP" id="MF_01394">
    <property type="entry name" value="NDH1_NuoA"/>
    <property type="match status" value="1"/>
</dbReference>
<dbReference type="InterPro" id="IPR023043">
    <property type="entry name" value="NAD(P)H_OxRDtase_bac/plastid"/>
</dbReference>
<dbReference type="InterPro" id="IPR000440">
    <property type="entry name" value="NADH_UbQ/plastoQ_OxRdtase_su3"/>
</dbReference>
<dbReference type="InterPro" id="IPR038430">
    <property type="entry name" value="NDAH_ubi_oxred_su3_sf"/>
</dbReference>
<dbReference type="PANTHER" id="PTHR11058">
    <property type="entry name" value="NADH-UBIQUINONE OXIDOREDUCTASE CHAIN 3"/>
    <property type="match status" value="1"/>
</dbReference>
<dbReference type="PANTHER" id="PTHR11058:SF9">
    <property type="entry name" value="NADH-UBIQUINONE OXIDOREDUCTASE CHAIN 3"/>
    <property type="match status" value="1"/>
</dbReference>
<dbReference type="Pfam" id="PF00507">
    <property type="entry name" value="Oxidored_q4"/>
    <property type="match status" value="1"/>
</dbReference>
<reference key="1">
    <citation type="journal article" date="2009" name="J. Bacteriol.">
        <title>The genome of Burkholderia cenocepacia J2315, an epidemic pathogen of cystic fibrosis patients.</title>
        <authorList>
            <person name="Holden M.T."/>
            <person name="Seth-Smith H.M."/>
            <person name="Crossman L.C."/>
            <person name="Sebaihia M."/>
            <person name="Bentley S.D."/>
            <person name="Cerdeno-Tarraga A.M."/>
            <person name="Thomson N.R."/>
            <person name="Bason N."/>
            <person name="Quail M.A."/>
            <person name="Sharp S."/>
            <person name="Cherevach I."/>
            <person name="Churcher C."/>
            <person name="Goodhead I."/>
            <person name="Hauser H."/>
            <person name="Holroyd N."/>
            <person name="Mungall K."/>
            <person name="Scott P."/>
            <person name="Walker D."/>
            <person name="White B."/>
            <person name="Rose H."/>
            <person name="Iversen P."/>
            <person name="Mil-Homens D."/>
            <person name="Rocha E.P."/>
            <person name="Fialho A.M."/>
            <person name="Baldwin A."/>
            <person name="Dowson C."/>
            <person name="Barrell B.G."/>
            <person name="Govan J.R."/>
            <person name="Vandamme P."/>
            <person name="Hart C.A."/>
            <person name="Mahenthiralingam E."/>
            <person name="Parkhill J."/>
        </authorList>
    </citation>
    <scope>NUCLEOTIDE SEQUENCE [LARGE SCALE GENOMIC DNA]</scope>
    <source>
        <strain>ATCC BAA-245 / DSM 16553 / LMG 16656 / NCTC 13227 / J2315 / CF5610</strain>
    </source>
</reference>
<proteinExistence type="inferred from homology"/>
<accession>B4E5M2</accession>
<keyword id="KW-0997">Cell inner membrane</keyword>
<keyword id="KW-1003">Cell membrane</keyword>
<keyword id="KW-0472">Membrane</keyword>
<keyword id="KW-0520">NAD</keyword>
<keyword id="KW-0874">Quinone</keyword>
<keyword id="KW-1278">Translocase</keyword>
<keyword id="KW-0812">Transmembrane</keyword>
<keyword id="KW-1133">Transmembrane helix</keyword>
<keyword id="KW-0813">Transport</keyword>
<keyword id="KW-0830">Ubiquinone</keyword>